<sequence>MHDRLISGTEKPEDHFDRAIRPTSLADYIGQPVVREQMEIFIGAARGRGEALDHTLIFGPPGLGKTTLANIIAREMGGNLKSTSGPVLERAGDLAAMLTNLEEGDVLFIDEIHRLSPVIEEILYPAMEDYQLDIMIGEGPAARSIKLDLPPFTLVAATTRAGLLTSPLRDRFGIVQRLEFYSVEDLTHIVTRSANLMNVPMTSTGAAEVARRSRGTPRIANRLLRRVRDYAQVKGTGEVTHDMAQRALDMLNVDKDGLDTLDRRYLSMLLERFDGGPAGVEALAAAMAEDSGTLEDVIEPYLIQQGYVMRTARGRIATNMAYLQFGLTPPEPKN</sequence>
<feature type="chain" id="PRO_0000165481" description="Holliday junction branch migration complex subunit RuvB">
    <location>
        <begin position="1"/>
        <end position="334"/>
    </location>
</feature>
<feature type="region of interest" description="Large ATPase domain (RuvB-L)" evidence="1">
    <location>
        <begin position="1"/>
        <end position="181"/>
    </location>
</feature>
<feature type="region of interest" description="Small ATPAse domain (RuvB-S)" evidence="1">
    <location>
        <begin position="182"/>
        <end position="252"/>
    </location>
</feature>
<feature type="region of interest" description="Head domain (RuvB-H)" evidence="1">
    <location>
        <begin position="255"/>
        <end position="334"/>
    </location>
</feature>
<feature type="binding site" evidence="1">
    <location>
        <position position="20"/>
    </location>
    <ligand>
        <name>ATP</name>
        <dbReference type="ChEBI" id="CHEBI:30616"/>
    </ligand>
</feature>
<feature type="binding site" evidence="1">
    <location>
        <position position="21"/>
    </location>
    <ligand>
        <name>ATP</name>
        <dbReference type="ChEBI" id="CHEBI:30616"/>
    </ligand>
</feature>
<feature type="binding site" evidence="1">
    <location>
        <position position="62"/>
    </location>
    <ligand>
        <name>ATP</name>
        <dbReference type="ChEBI" id="CHEBI:30616"/>
    </ligand>
</feature>
<feature type="binding site" evidence="1">
    <location>
        <position position="65"/>
    </location>
    <ligand>
        <name>ATP</name>
        <dbReference type="ChEBI" id="CHEBI:30616"/>
    </ligand>
</feature>
<feature type="binding site" evidence="1">
    <location>
        <position position="66"/>
    </location>
    <ligand>
        <name>ATP</name>
        <dbReference type="ChEBI" id="CHEBI:30616"/>
    </ligand>
</feature>
<feature type="binding site" evidence="1">
    <location>
        <position position="66"/>
    </location>
    <ligand>
        <name>Mg(2+)</name>
        <dbReference type="ChEBI" id="CHEBI:18420"/>
    </ligand>
</feature>
<feature type="binding site" evidence="1">
    <location>
        <position position="67"/>
    </location>
    <ligand>
        <name>ATP</name>
        <dbReference type="ChEBI" id="CHEBI:30616"/>
    </ligand>
</feature>
<feature type="binding site" evidence="1">
    <location>
        <begin position="128"/>
        <end position="130"/>
    </location>
    <ligand>
        <name>ATP</name>
        <dbReference type="ChEBI" id="CHEBI:30616"/>
    </ligand>
</feature>
<feature type="binding site" evidence="1">
    <location>
        <position position="171"/>
    </location>
    <ligand>
        <name>ATP</name>
        <dbReference type="ChEBI" id="CHEBI:30616"/>
    </ligand>
</feature>
<feature type="binding site" evidence="1">
    <location>
        <position position="181"/>
    </location>
    <ligand>
        <name>ATP</name>
        <dbReference type="ChEBI" id="CHEBI:30616"/>
    </ligand>
</feature>
<feature type="binding site" evidence="1">
    <location>
        <position position="218"/>
    </location>
    <ligand>
        <name>ATP</name>
        <dbReference type="ChEBI" id="CHEBI:30616"/>
    </ligand>
</feature>
<feature type="binding site" evidence="1">
    <location>
        <position position="310"/>
    </location>
    <ligand>
        <name>DNA</name>
        <dbReference type="ChEBI" id="CHEBI:16991"/>
    </ligand>
</feature>
<feature type="binding site" evidence="1">
    <location>
        <position position="315"/>
    </location>
    <ligand>
        <name>DNA</name>
        <dbReference type="ChEBI" id="CHEBI:16991"/>
    </ligand>
</feature>
<organism>
    <name type="scientific">Acinetobacter baylyi (strain ATCC 33305 / BD413 / ADP1)</name>
    <dbReference type="NCBI Taxonomy" id="62977"/>
    <lineage>
        <taxon>Bacteria</taxon>
        <taxon>Pseudomonadati</taxon>
        <taxon>Pseudomonadota</taxon>
        <taxon>Gammaproteobacteria</taxon>
        <taxon>Moraxellales</taxon>
        <taxon>Moraxellaceae</taxon>
        <taxon>Acinetobacter</taxon>
    </lineage>
</organism>
<gene>
    <name evidence="1" type="primary">ruvB</name>
    <name type="ordered locus">ACIAD2615</name>
</gene>
<dbReference type="EC" id="3.6.4.-" evidence="1"/>
<dbReference type="EMBL" id="CR543861">
    <property type="protein sequence ID" value="CAG69374.1"/>
    <property type="molecule type" value="Genomic_DNA"/>
</dbReference>
<dbReference type="RefSeq" id="WP_004928814.1">
    <property type="nucleotide sequence ID" value="NC_005966.1"/>
</dbReference>
<dbReference type="SMR" id="Q6F991"/>
<dbReference type="STRING" id="202950.GCA_001485005_01405"/>
<dbReference type="GeneID" id="45234895"/>
<dbReference type="KEGG" id="aci:ACIAD2615"/>
<dbReference type="eggNOG" id="COG2255">
    <property type="taxonomic scope" value="Bacteria"/>
</dbReference>
<dbReference type="HOGENOM" id="CLU_055599_1_0_6"/>
<dbReference type="OrthoDB" id="9804478at2"/>
<dbReference type="BioCyc" id="ASP62977:ACIAD_RS11890-MONOMER"/>
<dbReference type="Proteomes" id="UP000000430">
    <property type="component" value="Chromosome"/>
</dbReference>
<dbReference type="GO" id="GO:0005737">
    <property type="term" value="C:cytoplasm"/>
    <property type="evidence" value="ECO:0007669"/>
    <property type="project" value="UniProtKB-SubCell"/>
</dbReference>
<dbReference type="GO" id="GO:0048476">
    <property type="term" value="C:Holliday junction resolvase complex"/>
    <property type="evidence" value="ECO:0007669"/>
    <property type="project" value="UniProtKB-UniRule"/>
</dbReference>
<dbReference type="GO" id="GO:0005524">
    <property type="term" value="F:ATP binding"/>
    <property type="evidence" value="ECO:0007669"/>
    <property type="project" value="UniProtKB-UniRule"/>
</dbReference>
<dbReference type="GO" id="GO:0016887">
    <property type="term" value="F:ATP hydrolysis activity"/>
    <property type="evidence" value="ECO:0007669"/>
    <property type="project" value="InterPro"/>
</dbReference>
<dbReference type="GO" id="GO:0000400">
    <property type="term" value="F:four-way junction DNA binding"/>
    <property type="evidence" value="ECO:0007669"/>
    <property type="project" value="UniProtKB-UniRule"/>
</dbReference>
<dbReference type="GO" id="GO:0009378">
    <property type="term" value="F:four-way junction helicase activity"/>
    <property type="evidence" value="ECO:0007669"/>
    <property type="project" value="InterPro"/>
</dbReference>
<dbReference type="GO" id="GO:0006310">
    <property type="term" value="P:DNA recombination"/>
    <property type="evidence" value="ECO:0007669"/>
    <property type="project" value="UniProtKB-UniRule"/>
</dbReference>
<dbReference type="GO" id="GO:0006281">
    <property type="term" value="P:DNA repair"/>
    <property type="evidence" value="ECO:0007669"/>
    <property type="project" value="UniProtKB-UniRule"/>
</dbReference>
<dbReference type="CDD" id="cd00009">
    <property type="entry name" value="AAA"/>
    <property type="match status" value="1"/>
</dbReference>
<dbReference type="FunFam" id="1.10.8.60:FF:000023">
    <property type="entry name" value="Holliday junction ATP-dependent DNA helicase RuvB"/>
    <property type="match status" value="1"/>
</dbReference>
<dbReference type="FunFam" id="3.40.50.300:FF:000073">
    <property type="entry name" value="Holliday junction ATP-dependent DNA helicase RuvB"/>
    <property type="match status" value="1"/>
</dbReference>
<dbReference type="Gene3D" id="1.10.8.60">
    <property type="match status" value="1"/>
</dbReference>
<dbReference type="Gene3D" id="3.40.50.300">
    <property type="entry name" value="P-loop containing nucleotide triphosphate hydrolases"/>
    <property type="match status" value="1"/>
</dbReference>
<dbReference type="Gene3D" id="1.10.10.10">
    <property type="entry name" value="Winged helix-like DNA-binding domain superfamily/Winged helix DNA-binding domain"/>
    <property type="match status" value="1"/>
</dbReference>
<dbReference type="HAMAP" id="MF_00016">
    <property type="entry name" value="DNA_HJ_migration_RuvB"/>
    <property type="match status" value="1"/>
</dbReference>
<dbReference type="InterPro" id="IPR003593">
    <property type="entry name" value="AAA+_ATPase"/>
</dbReference>
<dbReference type="InterPro" id="IPR041445">
    <property type="entry name" value="AAA_lid_4"/>
</dbReference>
<dbReference type="InterPro" id="IPR004605">
    <property type="entry name" value="DNA_helicase_Holl-junc_RuvB"/>
</dbReference>
<dbReference type="InterPro" id="IPR027417">
    <property type="entry name" value="P-loop_NTPase"/>
</dbReference>
<dbReference type="InterPro" id="IPR008824">
    <property type="entry name" value="RuvB-like_N"/>
</dbReference>
<dbReference type="InterPro" id="IPR008823">
    <property type="entry name" value="RuvB_C"/>
</dbReference>
<dbReference type="InterPro" id="IPR036388">
    <property type="entry name" value="WH-like_DNA-bd_sf"/>
</dbReference>
<dbReference type="InterPro" id="IPR036390">
    <property type="entry name" value="WH_DNA-bd_sf"/>
</dbReference>
<dbReference type="NCBIfam" id="NF000868">
    <property type="entry name" value="PRK00080.1"/>
    <property type="match status" value="1"/>
</dbReference>
<dbReference type="NCBIfam" id="TIGR00635">
    <property type="entry name" value="ruvB"/>
    <property type="match status" value="1"/>
</dbReference>
<dbReference type="PANTHER" id="PTHR42848">
    <property type="match status" value="1"/>
</dbReference>
<dbReference type="PANTHER" id="PTHR42848:SF1">
    <property type="entry name" value="HOLLIDAY JUNCTION BRANCH MIGRATION COMPLEX SUBUNIT RUVB"/>
    <property type="match status" value="1"/>
</dbReference>
<dbReference type="Pfam" id="PF17864">
    <property type="entry name" value="AAA_lid_4"/>
    <property type="match status" value="1"/>
</dbReference>
<dbReference type="Pfam" id="PF05491">
    <property type="entry name" value="RuvB_C"/>
    <property type="match status" value="1"/>
</dbReference>
<dbReference type="Pfam" id="PF05496">
    <property type="entry name" value="RuvB_N"/>
    <property type="match status" value="1"/>
</dbReference>
<dbReference type="SMART" id="SM00382">
    <property type="entry name" value="AAA"/>
    <property type="match status" value="1"/>
</dbReference>
<dbReference type="SUPFAM" id="SSF52540">
    <property type="entry name" value="P-loop containing nucleoside triphosphate hydrolases"/>
    <property type="match status" value="1"/>
</dbReference>
<dbReference type="SUPFAM" id="SSF46785">
    <property type="entry name" value="Winged helix' DNA-binding domain"/>
    <property type="match status" value="1"/>
</dbReference>
<name>RUVB_ACIAD</name>
<accession>Q6F991</accession>
<evidence type="ECO:0000255" key="1">
    <source>
        <dbReference type="HAMAP-Rule" id="MF_00016"/>
    </source>
</evidence>
<protein>
    <recommendedName>
        <fullName evidence="1">Holliday junction branch migration complex subunit RuvB</fullName>
        <ecNumber evidence="1">3.6.4.-</ecNumber>
    </recommendedName>
</protein>
<comment type="function">
    <text evidence="1">The RuvA-RuvB-RuvC complex processes Holliday junction (HJ) DNA during genetic recombination and DNA repair, while the RuvA-RuvB complex plays an important role in the rescue of blocked DNA replication forks via replication fork reversal (RFR). RuvA specifically binds to HJ cruciform DNA, conferring on it an open structure. The RuvB hexamer acts as an ATP-dependent pump, pulling dsDNA into and through the RuvAB complex. RuvB forms 2 homohexamers on either side of HJ DNA bound by 1 or 2 RuvA tetramers; 4 subunits per hexamer contact DNA at a time. Coordinated motions by a converter formed by DNA-disengaged RuvB subunits stimulates ATP hydrolysis and nucleotide exchange. Immobilization of the converter enables RuvB to convert the ATP-contained energy into a lever motion, pulling 2 nucleotides of DNA out of the RuvA tetramer per ATP hydrolyzed, thus driving DNA branch migration. The RuvB motors rotate together with the DNA substrate, which together with the progressing nucleotide cycle form the mechanistic basis for DNA recombination by continuous HJ branch migration. Branch migration allows RuvC to scan DNA until it finds its consensus sequence, where it cleaves and resolves cruciform DNA.</text>
</comment>
<comment type="catalytic activity">
    <reaction evidence="1">
        <text>ATP + H2O = ADP + phosphate + H(+)</text>
        <dbReference type="Rhea" id="RHEA:13065"/>
        <dbReference type="ChEBI" id="CHEBI:15377"/>
        <dbReference type="ChEBI" id="CHEBI:15378"/>
        <dbReference type="ChEBI" id="CHEBI:30616"/>
        <dbReference type="ChEBI" id="CHEBI:43474"/>
        <dbReference type="ChEBI" id="CHEBI:456216"/>
    </reaction>
</comment>
<comment type="subunit">
    <text evidence="1">Homohexamer. Forms an RuvA(8)-RuvB(12)-Holliday junction (HJ) complex. HJ DNA is sandwiched between 2 RuvA tetramers; dsDNA enters through RuvA and exits via RuvB. An RuvB hexamer assembles on each DNA strand where it exits the tetramer. Each RuvB hexamer is contacted by two RuvA subunits (via domain III) on 2 adjacent RuvB subunits; this complex drives branch migration. In the full resolvosome a probable DNA-RuvA(4)-RuvB(12)-RuvC(2) complex forms which resolves the HJ.</text>
</comment>
<comment type="subcellular location">
    <subcellularLocation>
        <location evidence="1">Cytoplasm</location>
    </subcellularLocation>
</comment>
<comment type="domain">
    <text evidence="1">Has 3 domains, the large (RuvB-L) and small ATPase (RuvB-S) domains and the C-terminal head (RuvB-H) domain. The head domain binds DNA, while the ATPase domains jointly bind ATP, ADP or are empty depending on the state of the subunit in the translocation cycle. During a single DNA translocation step the structure of each domain remains the same, but their relative positions change.</text>
</comment>
<comment type="similarity">
    <text evidence="1">Belongs to the RuvB family.</text>
</comment>
<reference key="1">
    <citation type="journal article" date="2004" name="Nucleic Acids Res.">
        <title>Unique features revealed by the genome sequence of Acinetobacter sp. ADP1, a versatile and naturally transformation competent bacterium.</title>
        <authorList>
            <person name="Barbe V."/>
            <person name="Vallenet D."/>
            <person name="Fonknechten N."/>
            <person name="Kreimeyer A."/>
            <person name="Oztas S."/>
            <person name="Labarre L."/>
            <person name="Cruveiller S."/>
            <person name="Robert C."/>
            <person name="Duprat S."/>
            <person name="Wincker P."/>
            <person name="Ornston L.N."/>
            <person name="Weissenbach J."/>
            <person name="Marliere P."/>
            <person name="Cohen G.N."/>
            <person name="Medigue C."/>
        </authorList>
    </citation>
    <scope>NUCLEOTIDE SEQUENCE [LARGE SCALE GENOMIC DNA]</scope>
    <source>
        <strain>ATCC 33305 / BD413 / ADP1</strain>
    </source>
</reference>
<keyword id="KW-0067">ATP-binding</keyword>
<keyword id="KW-0963">Cytoplasm</keyword>
<keyword id="KW-0227">DNA damage</keyword>
<keyword id="KW-0233">DNA recombination</keyword>
<keyword id="KW-0234">DNA repair</keyword>
<keyword id="KW-0238">DNA-binding</keyword>
<keyword id="KW-0378">Hydrolase</keyword>
<keyword id="KW-0547">Nucleotide-binding</keyword>
<proteinExistence type="inferred from homology"/>